<organism>
    <name type="scientific">Mycobacterium leprae (strain TN)</name>
    <dbReference type="NCBI Taxonomy" id="272631"/>
    <lineage>
        <taxon>Bacteria</taxon>
        <taxon>Bacillati</taxon>
        <taxon>Actinomycetota</taxon>
        <taxon>Actinomycetes</taxon>
        <taxon>Mycobacteriales</taxon>
        <taxon>Mycobacteriaceae</taxon>
        <taxon>Mycobacterium</taxon>
    </lineage>
</organism>
<proteinExistence type="inferred from homology"/>
<protein>
    <recommendedName>
        <fullName evidence="1">Acetylglutamate kinase</fullName>
        <ecNumber evidence="1">2.7.2.8</ecNumber>
    </recommendedName>
    <alternativeName>
        <fullName evidence="1">N-acetyl-L-glutamate 5-phosphotransferase</fullName>
    </alternativeName>
    <alternativeName>
        <fullName evidence="1">NAG kinase</fullName>
        <shortName evidence="1">NAGK</shortName>
    </alternativeName>
</protein>
<accession>Q9CC13</accession>
<name>ARGB_MYCLE</name>
<evidence type="ECO:0000255" key="1">
    <source>
        <dbReference type="HAMAP-Rule" id="MF_00082"/>
    </source>
</evidence>
<evidence type="ECO:0000305" key="2"/>
<reference key="1">
    <citation type="journal article" date="2001" name="Nature">
        <title>Massive gene decay in the leprosy bacillus.</title>
        <authorList>
            <person name="Cole S.T."/>
            <person name="Eiglmeier K."/>
            <person name="Parkhill J."/>
            <person name="James K.D."/>
            <person name="Thomson N.R."/>
            <person name="Wheeler P.R."/>
            <person name="Honore N."/>
            <person name="Garnier T."/>
            <person name="Churcher C.M."/>
            <person name="Harris D.E."/>
            <person name="Mungall K.L."/>
            <person name="Basham D."/>
            <person name="Brown D."/>
            <person name="Chillingworth T."/>
            <person name="Connor R."/>
            <person name="Davies R.M."/>
            <person name="Devlin K."/>
            <person name="Duthoy S."/>
            <person name="Feltwell T."/>
            <person name="Fraser A."/>
            <person name="Hamlin N."/>
            <person name="Holroyd S."/>
            <person name="Hornsby T."/>
            <person name="Jagels K."/>
            <person name="Lacroix C."/>
            <person name="Maclean J."/>
            <person name="Moule S."/>
            <person name="Murphy L.D."/>
            <person name="Oliver K."/>
            <person name="Quail M.A."/>
            <person name="Rajandream M.A."/>
            <person name="Rutherford K.M."/>
            <person name="Rutter S."/>
            <person name="Seeger K."/>
            <person name="Simon S."/>
            <person name="Simmonds M."/>
            <person name="Skelton J."/>
            <person name="Squares R."/>
            <person name="Squares S."/>
            <person name="Stevens K."/>
            <person name="Taylor K."/>
            <person name="Whitehead S."/>
            <person name="Woodward J.R."/>
            <person name="Barrell B.G."/>
        </authorList>
    </citation>
    <scope>NUCLEOTIDE SEQUENCE [LARGE SCALE GENOMIC DNA]</scope>
    <source>
        <strain>TN</strain>
    </source>
</reference>
<keyword id="KW-0028">Amino-acid biosynthesis</keyword>
<keyword id="KW-0055">Arginine biosynthesis</keyword>
<keyword id="KW-0067">ATP-binding</keyword>
<keyword id="KW-0963">Cytoplasm</keyword>
<keyword id="KW-0418">Kinase</keyword>
<keyword id="KW-0547">Nucleotide-binding</keyword>
<keyword id="KW-1185">Reference proteome</keyword>
<keyword id="KW-0808">Transferase</keyword>
<sequence length="297" mass="31455">MNRTGDDETLSTQVKAEVLAEALPWLKQLHGKVVVVKYSGNAMTDDMLRRAFAADMAFLRNCGIHPVVVHGGGPQITAMLRRLGIADDFKGGFRVTTPEVLDVARMVLFGQVGRELVNLINAHGPYAVGITGEDAQLFTAGRRSATVDGMATDIGLVGDVDQVNIAAVLDLISAHRIPVVSTLAPDRDGVVHNINADTAAAALAETLGAEKLLMLTNVEGLYTRWPERDSLVNEIDSAALAQLLPTLEAGMIPKVEACLRAVTGGVPSAHVIDGRVKHCVLVELLTNEGTGTKVVSA</sequence>
<gene>
    <name evidence="1" type="primary">argB</name>
    <name type="ordered locus">ML1408</name>
</gene>
<comment type="function">
    <text evidence="1">Catalyzes the ATP-dependent phosphorylation of N-acetyl-L-glutamate.</text>
</comment>
<comment type="catalytic activity">
    <reaction evidence="1">
        <text>N-acetyl-L-glutamate + ATP = N-acetyl-L-glutamyl 5-phosphate + ADP</text>
        <dbReference type="Rhea" id="RHEA:14629"/>
        <dbReference type="ChEBI" id="CHEBI:30616"/>
        <dbReference type="ChEBI" id="CHEBI:44337"/>
        <dbReference type="ChEBI" id="CHEBI:57936"/>
        <dbReference type="ChEBI" id="CHEBI:456216"/>
        <dbReference type="EC" id="2.7.2.8"/>
    </reaction>
</comment>
<comment type="pathway">
    <text evidence="1">Amino-acid biosynthesis; L-arginine biosynthesis; N(2)-acetyl-L-ornithine from L-glutamate: step 2/4.</text>
</comment>
<comment type="subcellular location">
    <subcellularLocation>
        <location evidence="1">Cytoplasm</location>
    </subcellularLocation>
</comment>
<comment type="similarity">
    <text evidence="1">Belongs to the acetylglutamate kinase family. ArgB subfamily.</text>
</comment>
<comment type="sequence caution" evidence="2">
    <conflict type="erroneous initiation">
        <sequence resource="EMBL-CDS" id="CAC30359"/>
    </conflict>
</comment>
<feature type="chain" id="PRO_0000112635" description="Acetylglutamate kinase">
    <location>
        <begin position="1"/>
        <end position="297"/>
    </location>
</feature>
<feature type="binding site" evidence="1">
    <location>
        <begin position="72"/>
        <end position="73"/>
    </location>
    <ligand>
        <name>substrate</name>
    </ligand>
</feature>
<feature type="binding site" evidence="1">
    <location>
        <position position="94"/>
    </location>
    <ligand>
        <name>substrate</name>
    </ligand>
</feature>
<feature type="binding site" evidence="1">
    <location>
        <position position="193"/>
    </location>
    <ligand>
        <name>substrate</name>
    </ligand>
</feature>
<feature type="site" description="Transition state stabilizer" evidence="1">
    <location>
        <position position="37"/>
    </location>
</feature>
<feature type="site" description="Transition state stabilizer" evidence="1">
    <location>
        <position position="254"/>
    </location>
</feature>
<dbReference type="EC" id="2.7.2.8" evidence="1"/>
<dbReference type="EMBL" id="AL583922">
    <property type="protein sequence ID" value="CAC30359.1"/>
    <property type="status" value="ALT_INIT"/>
    <property type="molecule type" value="Genomic_DNA"/>
</dbReference>
<dbReference type="PIR" id="B87085">
    <property type="entry name" value="B87085"/>
</dbReference>
<dbReference type="RefSeq" id="WP_041323854.1">
    <property type="nucleotide sequence ID" value="NC_002677.1"/>
</dbReference>
<dbReference type="SMR" id="Q9CC13"/>
<dbReference type="STRING" id="272631.gene:17575247"/>
<dbReference type="KEGG" id="mle:ML1408"/>
<dbReference type="Leproma" id="ML1408"/>
<dbReference type="eggNOG" id="COG0548">
    <property type="taxonomic scope" value="Bacteria"/>
</dbReference>
<dbReference type="HOGENOM" id="CLU_053680_0_1_11"/>
<dbReference type="UniPathway" id="UPA00068">
    <property type="reaction ID" value="UER00107"/>
</dbReference>
<dbReference type="Proteomes" id="UP000000806">
    <property type="component" value="Chromosome"/>
</dbReference>
<dbReference type="GO" id="GO:0005737">
    <property type="term" value="C:cytoplasm"/>
    <property type="evidence" value="ECO:0007669"/>
    <property type="project" value="UniProtKB-SubCell"/>
</dbReference>
<dbReference type="GO" id="GO:0003991">
    <property type="term" value="F:acetylglutamate kinase activity"/>
    <property type="evidence" value="ECO:0007669"/>
    <property type="project" value="UniProtKB-UniRule"/>
</dbReference>
<dbReference type="GO" id="GO:0005524">
    <property type="term" value="F:ATP binding"/>
    <property type="evidence" value="ECO:0007669"/>
    <property type="project" value="UniProtKB-UniRule"/>
</dbReference>
<dbReference type="GO" id="GO:0042450">
    <property type="term" value="P:arginine biosynthetic process via ornithine"/>
    <property type="evidence" value="ECO:0007669"/>
    <property type="project" value="UniProtKB-UniRule"/>
</dbReference>
<dbReference type="GO" id="GO:0006526">
    <property type="term" value="P:L-arginine biosynthetic process"/>
    <property type="evidence" value="ECO:0007669"/>
    <property type="project" value="UniProtKB-UniPathway"/>
</dbReference>
<dbReference type="CDD" id="cd04250">
    <property type="entry name" value="AAK_NAGK-C"/>
    <property type="match status" value="1"/>
</dbReference>
<dbReference type="FunFam" id="3.40.1160.10:FF:000004">
    <property type="entry name" value="Acetylglutamate kinase"/>
    <property type="match status" value="1"/>
</dbReference>
<dbReference type="Gene3D" id="3.40.1160.10">
    <property type="entry name" value="Acetylglutamate kinase-like"/>
    <property type="match status" value="1"/>
</dbReference>
<dbReference type="HAMAP" id="MF_00082">
    <property type="entry name" value="ArgB"/>
    <property type="match status" value="1"/>
</dbReference>
<dbReference type="InterPro" id="IPR036393">
    <property type="entry name" value="AceGlu_kinase-like_sf"/>
</dbReference>
<dbReference type="InterPro" id="IPR004662">
    <property type="entry name" value="AcgluKinase_fam"/>
</dbReference>
<dbReference type="InterPro" id="IPR037528">
    <property type="entry name" value="ArgB"/>
</dbReference>
<dbReference type="InterPro" id="IPR001048">
    <property type="entry name" value="Asp/Glu/Uridylate_kinase"/>
</dbReference>
<dbReference type="InterPro" id="IPR041727">
    <property type="entry name" value="NAGK-C"/>
</dbReference>
<dbReference type="NCBIfam" id="TIGR00761">
    <property type="entry name" value="argB"/>
    <property type="match status" value="1"/>
</dbReference>
<dbReference type="PANTHER" id="PTHR23342">
    <property type="entry name" value="N-ACETYLGLUTAMATE SYNTHASE"/>
    <property type="match status" value="1"/>
</dbReference>
<dbReference type="PANTHER" id="PTHR23342:SF0">
    <property type="entry name" value="N-ACETYLGLUTAMATE SYNTHASE, MITOCHONDRIAL"/>
    <property type="match status" value="1"/>
</dbReference>
<dbReference type="Pfam" id="PF00696">
    <property type="entry name" value="AA_kinase"/>
    <property type="match status" value="1"/>
</dbReference>
<dbReference type="PIRSF" id="PIRSF000728">
    <property type="entry name" value="NAGK"/>
    <property type="match status" value="1"/>
</dbReference>
<dbReference type="SUPFAM" id="SSF53633">
    <property type="entry name" value="Carbamate kinase-like"/>
    <property type="match status" value="1"/>
</dbReference>